<feature type="chain" id="PRO_1000010676" description="Elongation factor P">
    <location>
        <begin position="1"/>
        <end position="185"/>
    </location>
</feature>
<accession>Q3MAQ3</accession>
<proteinExistence type="inferred from homology"/>
<sequence length="185" mass="20512">MISSNDFRPGVSIVLDGSVWRVIDFLHVKPGKGSAFVRTTLKNVQSGKVLEKTFRAGETVPQATLEKITMQHTYKEGDEFVFMDMESYEEGRLSASQIGDRVKYLKEGMEVNVIRWGEQVLEVELANSVVLEVIQTDPGVKGDTATGGTKPAIVETGATVMVPLFISQGERIKIDTRDDKYLGRE</sequence>
<dbReference type="EMBL" id="CP000117">
    <property type="protein sequence ID" value="ABA21933.1"/>
    <property type="molecule type" value="Genomic_DNA"/>
</dbReference>
<dbReference type="SMR" id="Q3MAQ3"/>
<dbReference type="STRING" id="240292.Ava_2315"/>
<dbReference type="KEGG" id="ava:Ava_2315"/>
<dbReference type="eggNOG" id="COG0231">
    <property type="taxonomic scope" value="Bacteria"/>
</dbReference>
<dbReference type="HOGENOM" id="CLU_074944_0_1_3"/>
<dbReference type="UniPathway" id="UPA00345"/>
<dbReference type="Proteomes" id="UP000002533">
    <property type="component" value="Chromosome"/>
</dbReference>
<dbReference type="GO" id="GO:0005737">
    <property type="term" value="C:cytoplasm"/>
    <property type="evidence" value="ECO:0007669"/>
    <property type="project" value="UniProtKB-SubCell"/>
</dbReference>
<dbReference type="GO" id="GO:0003746">
    <property type="term" value="F:translation elongation factor activity"/>
    <property type="evidence" value="ECO:0007669"/>
    <property type="project" value="UniProtKB-UniRule"/>
</dbReference>
<dbReference type="GO" id="GO:0043043">
    <property type="term" value="P:peptide biosynthetic process"/>
    <property type="evidence" value="ECO:0007669"/>
    <property type="project" value="InterPro"/>
</dbReference>
<dbReference type="CDD" id="cd04470">
    <property type="entry name" value="S1_EF-P_repeat_1"/>
    <property type="match status" value="1"/>
</dbReference>
<dbReference type="CDD" id="cd05794">
    <property type="entry name" value="S1_EF-P_repeat_2"/>
    <property type="match status" value="1"/>
</dbReference>
<dbReference type="FunFam" id="2.30.30.30:FF:000003">
    <property type="entry name" value="Elongation factor P"/>
    <property type="match status" value="1"/>
</dbReference>
<dbReference type="FunFam" id="2.40.50.140:FF:000004">
    <property type="entry name" value="Elongation factor P"/>
    <property type="match status" value="1"/>
</dbReference>
<dbReference type="FunFam" id="2.40.50.140:FF:000009">
    <property type="entry name" value="Elongation factor P"/>
    <property type="match status" value="1"/>
</dbReference>
<dbReference type="Gene3D" id="2.30.30.30">
    <property type="match status" value="1"/>
</dbReference>
<dbReference type="Gene3D" id="2.40.50.140">
    <property type="entry name" value="Nucleic acid-binding proteins"/>
    <property type="match status" value="2"/>
</dbReference>
<dbReference type="HAMAP" id="MF_00141">
    <property type="entry name" value="EF_P"/>
    <property type="match status" value="1"/>
</dbReference>
<dbReference type="InterPro" id="IPR015365">
    <property type="entry name" value="Elong-fact-P_C"/>
</dbReference>
<dbReference type="InterPro" id="IPR012340">
    <property type="entry name" value="NA-bd_OB-fold"/>
</dbReference>
<dbReference type="InterPro" id="IPR014722">
    <property type="entry name" value="Rib_uL2_dom2"/>
</dbReference>
<dbReference type="InterPro" id="IPR020599">
    <property type="entry name" value="Transl_elong_fac_P/YeiP"/>
</dbReference>
<dbReference type="InterPro" id="IPR013185">
    <property type="entry name" value="Transl_elong_KOW-like"/>
</dbReference>
<dbReference type="InterPro" id="IPR001059">
    <property type="entry name" value="Transl_elong_P/YeiP_cen"/>
</dbReference>
<dbReference type="InterPro" id="IPR013852">
    <property type="entry name" value="Transl_elong_P/YeiP_CS"/>
</dbReference>
<dbReference type="InterPro" id="IPR011768">
    <property type="entry name" value="Transl_elongation_fac_P"/>
</dbReference>
<dbReference type="InterPro" id="IPR008991">
    <property type="entry name" value="Translation_prot_SH3-like_sf"/>
</dbReference>
<dbReference type="NCBIfam" id="TIGR00038">
    <property type="entry name" value="efp"/>
    <property type="match status" value="1"/>
</dbReference>
<dbReference type="NCBIfam" id="NF001810">
    <property type="entry name" value="PRK00529.1"/>
    <property type="match status" value="1"/>
</dbReference>
<dbReference type="PANTHER" id="PTHR30053">
    <property type="entry name" value="ELONGATION FACTOR P"/>
    <property type="match status" value="1"/>
</dbReference>
<dbReference type="PANTHER" id="PTHR30053:SF12">
    <property type="entry name" value="ELONGATION FACTOR P (EF-P) FAMILY PROTEIN"/>
    <property type="match status" value="1"/>
</dbReference>
<dbReference type="Pfam" id="PF01132">
    <property type="entry name" value="EFP"/>
    <property type="match status" value="1"/>
</dbReference>
<dbReference type="Pfam" id="PF08207">
    <property type="entry name" value="EFP_N"/>
    <property type="match status" value="1"/>
</dbReference>
<dbReference type="Pfam" id="PF09285">
    <property type="entry name" value="Elong-fact-P_C"/>
    <property type="match status" value="1"/>
</dbReference>
<dbReference type="PIRSF" id="PIRSF005901">
    <property type="entry name" value="EF-P"/>
    <property type="match status" value="1"/>
</dbReference>
<dbReference type="SMART" id="SM01185">
    <property type="entry name" value="EFP"/>
    <property type="match status" value="1"/>
</dbReference>
<dbReference type="SMART" id="SM00841">
    <property type="entry name" value="Elong-fact-P_C"/>
    <property type="match status" value="1"/>
</dbReference>
<dbReference type="SUPFAM" id="SSF50249">
    <property type="entry name" value="Nucleic acid-binding proteins"/>
    <property type="match status" value="2"/>
</dbReference>
<dbReference type="SUPFAM" id="SSF50104">
    <property type="entry name" value="Translation proteins SH3-like domain"/>
    <property type="match status" value="1"/>
</dbReference>
<dbReference type="PROSITE" id="PS01275">
    <property type="entry name" value="EFP"/>
    <property type="match status" value="1"/>
</dbReference>
<name>EFP_TRIV2</name>
<gene>
    <name evidence="1" type="primary">efp</name>
    <name type="ordered locus">Ava_2315</name>
</gene>
<organism>
    <name type="scientific">Trichormus variabilis (strain ATCC 29413 / PCC 7937)</name>
    <name type="common">Anabaena variabilis</name>
    <dbReference type="NCBI Taxonomy" id="240292"/>
    <lineage>
        <taxon>Bacteria</taxon>
        <taxon>Bacillati</taxon>
        <taxon>Cyanobacteriota</taxon>
        <taxon>Cyanophyceae</taxon>
        <taxon>Nostocales</taxon>
        <taxon>Nostocaceae</taxon>
        <taxon>Trichormus</taxon>
    </lineage>
</organism>
<keyword id="KW-0963">Cytoplasm</keyword>
<keyword id="KW-0251">Elongation factor</keyword>
<keyword id="KW-0648">Protein biosynthesis</keyword>
<reference key="1">
    <citation type="journal article" date="2014" name="Stand. Genomic Sci.">
        <title>Complete genome sequence of Anabaena variabilis ATCC 29413.</title>
        <authorList>
            <person name="Thiel T."/>
            <person name="Pratte B.S."/>
            <person name="Zhong J."/>
            <person name="Goodwin L."/>
            <person name="Copeland A."/>
            <person name="Lucas S."/>
            <person name="Han C."/>
            <person name="Pitluck S."/>
            <person name="Land M.L."/>
            <person name="Kyrpides N.C."/>
            <person name="Woyke T."/>
        </authorList>
    </citation>
    <scope>NUCLEOTIDE SEQUENCE [LARGE SCALE GENOMIC DNA]</scope>
    <source>
        <strain>ATCC 29413 / PCC 7937</strain>
    </source>
</reference>
<protein>
    <recommendedName>
        <fullName evidence="1">Elongation factor P</fullName>
        <shortName evidence="1">EF-P</shortName>
    </recommendedName>
</protein>
<comment type="function">
    <text evidence="1">Involved in peptide bond synthesis. Stimulates efficient translation and peptide-bond synthesis on native or reconstituted 70S ribosomes in vitro. Probably functions indirectly by altering the affinity of the ribosome for aminoacyl-tRNA, thus increasing their reactivity as acceptors for peptidyl transferase.</text>
</comment>
<comment type="pathway">
    <text evidence="1">Protein biosynthesis; polypeptide chain elongation.</text>
</comment>
<comment type="subcellular location">
    <subcellularLocation>
        <location evidence="1">Cytoplasm</location>
    </subcellularLocation>
</comment>
<comment type="similarity">
    <text evidence="1">Belongs to the elongation factor P family.</text>
</comment>
<evidence type="ECO:0000255" key="1">
    <source>
        <dbReference type="HAMAP-Rule" id="MF_00141"/>
    </source>
</evidence>